<organism>
    <name type="scientific">Cycas revoluta</name>
    <name type="common">Sago palm</name>
    <dbReference type="NCBI Taxonomy" id="3396"/>
    <lineage>
        <taxon>Eukaryota</taxon>
        <taxon>Viridiplantae</taxon>
        <taxon>Streptophyta</taxon>
        <taxon>Embryophyta</taxon>
        <taxon>Tracheophyta</taxon>
        <taxon>Spermatophyta</taxon>
        <taxon>Cycadidae</taxon>
        <taxon>Cycadales</taxon>
        <taxon>Cycadaceae</taxon>
        <taxon>Cycas</taxon>
    </lineage>
</organism>
<keyword id="KW-0028">Amino-acid biosynthesis</keyword>
<keyword id="KW-0100">Branched-chain amino acid biosynthesis</keyword>
<keyword id="KW-0134">Cell wall</keyword>
<keyword id="KW-0903">Direct protein sequencing</keyword>
<keyword id="KW-0432">Leucine biosynthesis</keyword>
<keyword id="KW-0964">Secreted</keyword>
<keyword id="KW-0808">Transferase</keyword>
<evidence type="ECO:0000269" key="1">
    <source>
    </source>
</evidence>
<evidence type="ECO:0000303" key="2">
    <source>
    </source>
</evidence>
<evidence type="ECO:0000305" key="3"/>
<name>LEU1_CYCRE</name>
<accession>P85362</accession>
<sequence length="9" mass="1061">FAQLLNDLK</sequence>
<protein>
    <recommendedName>
        <fullName>2-isopropylmalate synthase</fullName>
        <ecNumber>2.3.3.13</ecNumber>
    </recommendedName>
    <alternativeName>
        <fullName>Alpha-IPM synthase</fullName>
    </alternativeName>
    <alternativeName>
        <fullName>Alpha-isopropylmalate synthase</fullName>
    </alternativeName>
</protein>
<feature type="chain" id="PRO_0000315942" description="2-isopropylmalate synthase">
    <location>
        <begin position="1" status="less than"/>
        <end position="9" status="greater than"/>
    </location>
</feature>
<feature type="unsure residue" description="L or I" evidence="1">
    <location>
        <position position="4"/>
    </location>
</feature>
<feature type="unsure residue" description="L or I" evidence="1">
    <location>
        <position position="5"/>
    </location>
</feature>
<feature type="unsure residue" description="L or I" evidence="1">
    <location>
        <position position="8"/>
    </location>
</feature>
<feature type="unsure residue" description="K or Q" evidence="1">
    <location>
        <position position="9"/>
    </location>
</feature>
<feature type="non-terminal residue" evidence="2">
    <location>
        <position position="1"/>
    </location>
</feature>
<feature type="non-terminal residue" evidence="2">
    <location>
        <position position="9"/>
    </location>
</feature>
<reference evidence="3" key="1">
    <citation type="journal article" date="2009" name="J. Plant Physiol.">
        <title>Analysis of the soluble cell wall proteome of gymnosperms.</title>
        <authorList>
            <person name="Uzal E.N."/>
            <person name="Gomez-Ros L.V."/>
            <person name="Hernandez J.A."/>
            <person name="Pedreno M.A."/>
            <person name="Cuello J."/>
            <person name="Ros Barcelo A."/>
        </authorList>
    </citation>
    <scope>PROTEIN SEQUENCE</scope>
    <scope>SUBCELLULAR LOCATION</scope>
    <source>
        <tissue evidence="1">Callus</tissue>
    </source>
</reference>
<proteinExistence type="evidence at protein level"/>
<comment type="function">
    <text>Catalyzes the condensation of the acetyl group of acetyl-CoA with 3-methyl-2-oxobutanoate (2-oxoisovalerate) to form 3-carboxy-3-hydroxy-4-methylpentanoate (2-isopropylmalate).</text>
</comment>
<comment type="catalytic activity">
    <reaction>
        <text>3-methyl-2-oxobutanoate + acetyl-CoA + H2O = (2S)-2-isopropylmalate + CoA + H(+)</text>
        <dbReference type="Rhea" id="RHEA:21524"/>
        <dbReference type="ChEBI" id="CHEBI:1178"/>
        <dbReference type="ChEBI" id="CHEBI:11851"/>
        <dbReference type="ChEBI" id="CHEBI:15377"/>
        <dbReference type="ChEBI" id="CHEBI:15378"/>
        <dbReference type="ChEBI" id="CHEBI:57287"/>
        <dbReference type="ChEBI" id="CHEBI:57288"/>
        <dbReference type="EC" id="2.3.3.13"/>
    </reaction>
</comment>
<comment type="pathway">
    <text>Amino-acid biosynthesis; L-leucine biosynthesis; L-leucine from 3-methyl-2-oxobutanoate: step 1/4.</text>
</comment>
<comment type="subcellular location">
    <subcellularLocation>
        <location evidence="1">Secreted</location>
        <location evidence="1">Cell wall</location>
    </subcellularLocation>
</comment>
<comment type="similarity">
    <text evidence="3">Belongs to the alpha-IPM synthase/homocitrate synthase family. LeuA type 1 subfamily.</text>
</comment>
<dbReference type="EC" id="2.3.3.13"/>
<dbReference type="UniPathway" id="UPA00048">
    <property type="reaction ID" value="UER00070"/>
</dbReference>
<dbReference type="GO" id="GO:0005576">
    <property type="term" value="C:extracellular region"/>
    <property type="evidence" value="ECO:0007669"/>
    <property type="project" value="UniProtKB-KW"/>
</dbReference>
<dbReference type="GO" id="GO:0003852">
    <property type="term" value="F:2-isopropylmalate synthase activity"/>
    <property type="evidence" value="ECO:0007669"/>
    <property type="project" value="UniProtKB-EC"/>
</dbReference>
<dbReference type="GO" id="GO:0009098">
    <property type="term" value="P:L-leucine biosynthetic process"/>
    <property type="evidence" value="ECO:0007669"/>
    <property type="project" value="UniProtKB-UniPathway"/>
</dbReference>